<protein>
    <recommendedName>
        <fullName>Short transient receptor potential channel 2 homolog</fullName>
        <shortName>TrpC2</shortName>
    </recommendedName>
    <alternativeName>
        <fullName>Transient receptor protein 2</fullName>
        <shortName>TRP-2</shortName>
        <shortName>bTrp2</shortName>
    </alternativeName>
</protein>
<keyword id="KW-0106">Calcium</keyword>
<keyword id="KW-0107">Calcium channel</keyword>
<keyword id="KW-0109">Calcium transport</keyword>
<keyword id="KW-0407">Ion channel</keyword>
<keyword id="KW-0406">Ion transport</keyword>
<keyword id="KW-0472">Membrane</keyword>
<keyword id="KW-1185">Reference proteome</keyword>
<keyword id="KW-0812">Transmembrane</keyword>
<keyword id="KW-1133">Transmembrane helix</keyword>
<keyword id="KW-0813">Transport</keyword>
<accession>O62826</accession>
<sequence length="432" mass="48057">MVILSLYLAAFTLRLLLAGLAHKHCRDAPDGAACHYFTSAERSEWRTEDPQFLAEVLFAVTSMLSFTRLASILPAHESLGTLQISMGRMIDDMIRFMFILMIILTAFLCGLNNIYVPYQETERLGNFNETFQFLFWTMFGMEEHSVVDMPQFLVPEFVGRALYGIFTIVMVIVLLNMLIAMITNSFQKIEDAADVEWKFARSKLYLSYFREGLTLPVPFNILPSPKAIFYLLRRVFRFICCCHFCCKTKKPDYPPIPTFANPGAGAGPGEGERGSYRLRVIKALVQRYIETAQREFEETRRKDLGNRLTELTKTVSRLQSEVAGVQRAVVEAGPRRPPGGASVLSRYITRVRNSFQNLGPPIPETPELTVPATVGTQESSEIGLPDAGGAQAPASGESGPSSPAHVLVHREQESEGAGDLPQEADLGAKEGT</sequence>
<dbReference type="EMBL" id="AJ006304">
    <property type="protein sequence ID" value="CAA06964.1"/>
    <property type="molecule type" value="mRNA"/>
</dbReference>
<dbReference type="SMR" id="O62826"/>
<dbReference type="STRING" id="9913.ENSBTAP00000015344"/>
<dbReference type="PaxDb" id="9913-ENSBTAP00000015344"/>
<dbReference type="eggNOG" id="KOG3609">
    <property type="taxonomic scope" value="Eukaryota"/>
</dbReference>
<dbReference type="InParanoid" id="O62826"/>
<dbReference type="OrthoDB" id="25840at2759"/>
<dbReference type="Proteomes" id="UP000009136">
    <property type="component" value="Unplaced"/>
</dbReference>
<dbReference type="GO" id="GO:0034703">
    <property type="term" value="C:cation channel complex"/>
    <property type="evidence" value="ECO:0000318"/>
    <property type="project" value="GO_Central"/>
</dbReference>
<dbReference type="GO" id="GO:0005886">
    <property type="term" value="C:plasma membrane"/>
    <property type="evidence" value="ECO:0000318"/>
    <property type="project" value="GO_Central"/>
</dbReference>
<dbReference type="GO" id="GO:0070679">
    <property type="term" value="F:inositol 1,4,5 trisphosphate binding"/>
    <property type="evidence" value="ECO:0000318"/>
    <property type="project" value="GO_Central"/>
</dbReference>
<dbReference type="GO" id="GO:0015279">
    <property type="term" value="F:store-operated calcium channel activity"/>
    <property type="evidence" value="ECO:0000318"/>
    <property type="project" value="GO_Central"/>
</dbReference>
<dbReference type="GO" id="GO:0070588">
    <property type="term" value="P:calcium ion transmembrane transport"/>
    <property type="evidence" value="ECO:0000318"/>
    <property type="project" value="GO_Central"/>
</dbReference>
<dbReference type="GO" id="GO:0051480">
    <property type="term" value="P:regulation of cytosolic calcium ion concentration"/>
    <property type="evidence" value="ECO:0000318"/>
    <property type="project" value="GO_Central"/>
</dbReference>
<dbReference type="GO" id="GO:0007338">
    <property type="term" value="P:single fertilization"/>
    <property type="evidence" value="ECO:0000318"/>
    <property type="project" value="GO_Central"/>
</dbReference>
<dbReference type="InterPro" id="IPR005821">
    <property type="entry name" value="Ion_trans_dom"/>
</dbReference>
<dbReference type="InterPro" id="IPR005458">
    <property type="entry name" value="TRPC2_channel"/>
</dbReference>
<dbReference type="InterPro" id="IPR002153">
    <property type="entry name" value="TRPC_channel"/>
</dbReference>
<dbReference type="PANTHER" id="PTHR10117:SF6">
    <property type="entry name" value="SHORT TRANSIENT RECEPTOR POTENTIAL CHANNEL 2"/>
    <property type="match status" value="1"/>
</dbReference>
<dbReference type="PANTHER" id="PTHR10117">
    <property type="entry name" value="TRANSIENT RECEPTOR POTENTIAL CHANNEL"/>
    <property type="match status" value="1"/>
</dbReference>
<dbReference type="Pfam" id="PF00520">
    <property type="entry name" value="Ion_trans"/>
    <property type="match status" value="1"/>
</dbReference>
<dbReference type="PRINTS" id="PR01097">
    <property type="entry name" value="TRNSRECEPTRP"/>
</dbReference>
<dbReference type="PRINTS" id="PR01643">
    <property type="entry name" value="TRPCHANNEL2"/>
</dbReference>
<feature type="chain" id="PRO_0000215309" description="Short transient receptor potential channel 2 homolog">
    <location>
        <begin position="1"/>
        <end position="432"/>
    </location>
</feature>
<feature type="transmembrane region" description="Helical" evidence="2">
    <location>
        <begin position="1"/>
        <end position="21"/>
    </location>
</feature>
<feature type="transmembrane region" description="Helical" evidence="2">
    <location>
        <begin position="52"/>
        <end position="72"/>
    </location>
</feature>
<feature type="transmembrane region" description="Helical" evidence="2">
    <location>
        <begin position="96"/>
        <end position="116"/>
    </location>
</feature>
<feature type="transmembrane region" description="Helical" evidence="2">
    <location>
        <begin position="162"/>
        <end position="182"/>
    </location>
</feature>
<feature type="region of interest" description="Disordered" evidence="3">
    <location>
        <begin position="356"/>
        <end position="432"/>
    </location>
</feature>
<feature type="compositionally biased region" description="Low complexity" evidence="3">
    <location>
        <begin position="387"/>
        <end position="404"/>
    </location>
</feature>
<name>TRPC2_BOVIN</name>
<reference key="1">
    <citation type="journal article" date="1998" name="FEBS Lett.">
        <title>Structure and mRNA expression of a bovine trp homologue related to mammalian trp2 transcripts.</title>
        <authorList>
            <person name="Wissenbach U."/>
            <person name="Schroth G."/>
            <person name="Philipp S."/>
            <person name="Flockerzi V."/>
        </authorList>
    </citation>
    <scope>NUCLEOTIDE SEQUENCE [MRNA]</scope>
    <source>
        <tissue>Testis</tissue>
    </source>
</reference>
<organism>
    <name type="scientific">Bos taurus</name>
    <name type="common">Bovine</name>
    <dbReference type="NCBI Taxonomy" id="9913"/>
    <lineage>
        <taxon>Eukaryota</taxon>
        <taxon>Metazoa</taxon>
        <taxon>Chordata</taxon>
        <taxon>Craniata</taxon>
        <taxon>Vertebrata</taxon>
        <taxon>Euteleostomi</taxon>
        <taxon>Mammalia</taxon>
        <taxon>Eutheria</taxon>
        <taxon>Laurasiatheria</taxon>
        <taxon>Artiodactyla</taxon>
        <taxon>Ruminantia</taxon>
        <taxon>Pecora</taxon>
        <taxon>Bovidae</taxon>
        <taxon>Bovinae</taxon>
        <taxon>Bos</taxon>
    </lineage>
</organism>
<evidence type="ECO:0000250" key="1"/>
<evidence type="ECO:0000255" key="2"/>
<evidence type="ECO:0000256" key="3">
    <source>
        <dbReference type="SAM" id="MobiDB-lite"/>
    </source>
</evidence>
<evidence type="ECO:0000305" key="4"/>
<proteinExistence type="evidence at transcript level"/>
<comment type="function">
    <text evidence="1">Thought to form a receptor-activated calcium permeant cation channel.</text>
</comment>
<comment type="subcellular location">
    <subcellularLocation>
        <location evidence="4">Membrane</location>
        <topology evidence="4">Multi-pass membrane protein</topology>
    </subcellularLocation>
</comment>
<comment type="similarity">
    <text evidence="4">Belongs to the transient receptor (TC 1.A.4) family. STrpC subfamily. TRPC2 sub-subfamily.</text>
</comment>
<gene>
    <name type="primary">TRPC2</name>
    <name type="synonym">TRP2</name>
</gene>